<keyword id="KW-0687">Ribonucleoprotein</keyword>
<keyword id="KW-0689">Ribosomal protein</keyword>
<keyword id="KW-0694">RNA-binding</keyword>
<keyword id="KW-0699">rRNA-binding</keyword>
<name>RL18_PROM1</name>
<comment type="function">
    <text evidence="1">This is one of the proteins that bind and probably mediate the attachment of the 5S RNA into the large ribosomal subunit, where it forms part of the central protuberance.</text>
</comment>
<comment type="subunit">
    <text evidence="1">Part of the 50S ribosomal subunit; part of the 5S rRNA/L5/L18/L25 subcomplex. Contacts the 5S and 23S rRNAs.</text>
</comment>
<comment type="similarity">
    <text evidence="1">Belongs to the universal ribosomal protein uL18 family.</text>
</comment>
<organism>
    <name type="scientific">Prochlorococcus marinus (strain NATL1A)</name>
    <dbReference type="NCBI Taxonomy" id="167555"/>
    <lineage>
        <taxon>Bacteria</taxon>
        <taxon>Bacillati</taxon>
        <taxon>Cyanobacteriota</taxon>
        <taxon>Cyanophyceae</taxon>
        <taxon>Synechococcales</taxon>
        <taxon>Prochlorococcaceae</taxon>
        <taxon>Prochlorococcus</taxon>
    </lineage>
</organism>
<evidence type="ECO:0000255" key="1">
    <source>
        <dbReference type="HAMAP-Rule" id="MF_01337"/>
    </source>
</evidence>
<evidence type="ECO:0000256" key="2">
    <source>
        <dbReference type="SAM" id="MobiDB-lite"/>
    </source>
</evidence>
<evidence type="ECO:0000305" key="3"/>
<proteinExistence type="inferred from homology"/>
<accession>A2C4Y4</accession>
<sequence>MSKLSRKQQTQKRHKRLRRNLSGTESRPRLAVFRSNNHIYAQIIDDDAQNTICAASTLDKDLKASLKVNAGSCDASTAVGELVAKKALSKGIKQVIFDRGGNIYHGRVKALAEAARVAGLNF</sequence>
<dbReference type="EMBL" id="CP000553">
    <property type="protein sequence ID" value="ABM76544.1"/>
    <property type="molecule type" value="Genomic_DNA"/>
</dbReference>
<dbReference type="RefSeq" id="WP_011295458.1">
    <property type="nucleotide sequence ID" value="NC_008819.1"/>
</dbReference>
<dbReference type="SMR" id="A2C4Y4"/>
<dbReference type="KEGG" id="pme:NATL1_19881"/>
<dbReference type="eggNOG" id="COG0256">
    <property type="taxonomic scope" value="Bacteria"/>
</dbReference>
<dbReference type="HOGENOM" id="CLU_098841_0_1_3"/>
<dbReference type="Proteomes" id="UP000002592">
    <property type="component" value="Chromosome"/>
</dbReference>
<dbReference type="GO" id="GO:0022625">
    <property type="term" value="C:cytosolic large ribosomal subunit"/>
    <property type="evidence" value="ECO:0007669"/>
    <property type="project" value="TreeGrafter"/>
</dbReference>
<dbReference type="GO" id="GO:0008097">
    <property type="term" value="F:5S rRNA binding"/>
    <property type="evidence" value="ECO:0007669"/>
    <property type="project" value="TreeGrafter"/>
</dbReference>
<dbReference type="GO" id="GO:0003735">
    <property type="term" value="F:structural constituent of ribosome"/>
    <property type="evidence" value="ECO:0007669"/>
    <property type="project" value="InterPro"/>
</dbReference>
<dbReference type="GO" id="GO:0006412">
    <property type="term" value="P:translation"/>
    <property type="evidence" value="ECO:0007669"/>
    <property type="project" value="UniProtKB-UniRule"/>
</dbReference>
<dbReference type="CDD" id="cd00432">
    <property type="entry name" value="Ribosomal_L18_L5e"/>
    <property type="match status" value="1"/>
</dbReference>
<dbReference type="FunFam" id="3.30.420.100:FF:000001">
    <property type="entry name" value="50S ribosomal protein L18"/>
    <property type="match status" value="1"/>
</dbReference>
<dbReference type="Gene3D" id="3.30.420.100">
    <property type="match status" value="1"/>
</dbReference>
<dbReference type="HAMAP" id="MF_01337_B">
    <property type="entry name" value="Ribosomal_uL18_B"/>
    <property type="match status" value="1"/>
</dbReference>
<dbReference type="InterPro" id="IPR004389">
    <property type="entry name" value="Ribosomal_uL18_bac-type"/>
</dbReference>
<dbReference type="InterPro" id="IPR005484">
    <property type="entry name" value="Ribosomal_uL18_bac/euk"/>
</dbReference>
<dbReference type="NCBIfam" id="TIGR00060">
    <property type="entry name" value="L18_bact"/>
    <property type="match status" value="1"/>
</dbReference>
<dbReference type="PANTHER" id="PTHR12899">
    <property type="entry name" value="39S RIBOSOMAL PROTEIN L18, MITOCHONDRIAL"/>
    <property type="match status" value="1"/>
</dbReference>
<dbReference type="PANTHER" id="PTHR12899:SF3">
    <property type="entry name" value="LARGE RIBOSOMAL SUBUNIT PROTEIN UL18M"/>
    <property type="match status" value="1"/>
</dbReference>
<dbReference type="Pfam" id="PF00861">
    <property type="entry name" value="Ribosomal_L18p"/>
    <property type="match status" value="1"/>
</dbReference>
<dbReference type="SUPFAM" id="SSF53137">
    <property type="entry name" value="Translational machinery components"/>
    <property type="match status" value="1"/>
</dbReference>
<feature type="chain" id="PRO_1000053080" description="Large ribosomal subunit protein uL18">
    <location>
        <begin position="1"/>
        <end position="122"/>
    </location>
</feature>
<feature type="region of interest" description="Disordered" evidence="2">
    <location>
        <begin position="1"/>
        <end position="27"/>
    </location>
</feature>
<feature type="compositionally biased region" description="Basic residues" evidence="2">
    <location>
        <begin position="1"/>
        <end position="19"/>
    </location>
</feature>
<protein>
    <recommendedName>
        <fullName evidence="1">Large ribosomal subunit protein uL18</fullName>
    </recommendedName>
    <alternativeName>
        <fullName evidence="3">50S ribosomal protein L18</fullName>
    </alternativeName>
</protein>
<gene>
    <name evidence="1" type="primary">rplR</name>
    <name evidence="1" type="synonym">rpl18</name>
    <name type="ordered locus">NATL1_19881</name>
</gene>
<reference key="1">
    <citation type="journal article" date="2007" name="PLoS Genet.">
        <title>Patterns and implications of gene gain and loss in the evolution of Prochlorococcus.</title>
        <authorList>
            <person name="Kettler G.C."/>
            <person name="Martiny A.C."/>
            <person name="Huang K."/>
            <person name="Zucker J."/>
            <person name="Coleman M.L."/>
            <person name="Rodrigue S."/>
            <person name="Chen F."/>
            <person name="Lapidus A."/>
            <person name="Ferriera S."/>
            <person name="Johnson J."/>
            <person name="Steglich C."/>
            <person name="Church G.M."/>
            <person name="Richardson P."/>
            <person name="Chisholm S.W."/>
        </authorList>
    </citation>
    <scope>NUCLEOTIDE SEQUENCE [LARGE SCALE GENOMIC DNA]</scope>
    <source>
        <strain>NATL1A</strain>
    </source>
</reference>